<accession>Q4L7A3</accession>
<protein>
    <recommendedName>
        <fullName evidence="1">Leucine--tRNA ligase</fullName>
        <ecNumber evidence="1">6.1.1.4</ecNumber>
    </recommendedName>
    <alternativeName>
        <fullName evidence="1">Leucyl-tRNA synthetase</fullName>
        <shortName evidence="1">LeuRS</shortName>
    </alternativeName>
</protein>
<gene>
    <name evidence="1" type="primary">leuS</name>
    <name type="ordered locus">SH1163</name>
</gene>
<organism>
    <name type="scientific">Staphylococcus haemolyticus (strain JCSC1435)</name>
    <dbReference type="NCBI Taxonomy" id="279808"/>
    <lineage>
        <taxon>Bacteria</taxon>
        <taxon>Bacillati</taxon>
        <taxon>Bacillota</taxon>
        <taxon>Bacilli</taxon>
        <taxon>Bacillales</taxon>
        <taxon>Staphylococcaceae</taxon>
        <taxon>Staphylococcus</taxon>
    </lineage>
</organism>
<feature type="chain" id="PRO_1000009440" description="Leucine--tRNA ligase">
    <location>
        <begin position="1"/>
        <end position="804"/>
    </location>
</feature>
<feature type="short sequence motif" description="'HIGH' region">
    <location>
        <begin position="40"/>
        <end position="51"/>
    </location>
</feature>
<feature type="short sequence motif" description="'KMSKS' region">
    <location>
        <begin position="576"/>
        <end position="580"/>
    </location>
</feature>
<feature type="binding site" evidence="1">
    <location>
        <position position="579"/>
    </location>
    <ligand>
        <name>ATP</name>
        <dbReference type="ChEBI" id="CHEBI:30616"/>
    </ligand>
</feature>
<proteinExistence type="inferred from homology"/>
<dbReference type="EC" id="6.1.1.4" evidence="1"/>
<dbReference type="EMBL" id="AP006716">
    <property type="protein sequence ID" value="BAE04472.1"/>
    <property type="molecule type" value="Genomic_DNA"/>
</dbReference>
<dbReference type="RefSeq" id="WP_011275464.1">
    <property type="nucleotide sequence ID" value="NC_007168.1"/>
</dbReference>
<dbReference type="SMR" id="Q4L7A3"/>
<dbReference type="KEGG" id="sha:SH1163"/>
<dbReference type="eggNOG" id="COG0495">
    <property type="taxonomic scope" value="Bacteria"/>
</dbReference>
<dbReference type="HOGENOM" id="CLU_004427_0_0_9"/>
<dbReference type="OrthoDB" id="9810365at2"/>
<dbReference type="Proteomes" id="UP000000543">
    <property type="component" value="Chromosome"/>
</dbReference>
<dbReference type="GO" id="GO:0005829">
    <property type="term" value="C:cytosol"/>
    <property type="evidence" value="ECO:0007669"/>
    <property type="project" value="TreeGrafter"/>
</dbReference>
<dbReference type="GO" id="GO:0002161">
    <property type="term" value="F:aminoacyl-tRNA deacylase activity"/>
    <property type="evidence" value="ECO:0007669"/>
    <property type="project" value="InterPro"/>
</dbReference>
<dbReference type="GO" id="GO:0005524">
    <property type="term" value="F:ATP binding"/>
    <property type="evidence" value="ECO:0007669"/>
    <property type="project" value="UniProtKB-UniRule"/>
</dbReference>
<dbReference type="GO" id="GO:0004823">
    <property type="term" value="F:leucine-tRNA ligase activity"/>
    <property type="evidence" value="ECO:0007669"/>
    <property type="project" value="UniProtKB-UniRule"/>
</dbReference>
<dbReference type="GO" id="GO:0006429">
    <property type="term" value="P:leucyl-tRNA aminoacylation"/>
    <property type="evidence" value="ECO:0007669"/>
    <property type="project" value="UniProtKB-UniRule"/>
</dbReference>
<dbReference type="CDD" id="cd07958">
    <property type="entry name" value="Anticodon_Ia_Leu_BEm"/>
    <property type="match status" value="1"/>
</dbReference>
<dbReference type="CDD" id="cd00812">
    <property type="entry name" value="LeuRS_core"/>
    <property type="match status" value="1"/>
</dbReference>
<dbReference type="FunFam" id="1.10.730.10:FF:000012">
    <property type="entry name" value="Leucine--tRNA ligase"/>
    <property type="match status" value="1"/>
</dbReference>
<dbReference type="FunFam" id="1.10.730.10:FF:000018">
    <property type="entry name" value="Leucine--tRNA ligase"/>
    <property type="match status" value="1"/>
</dbReference>
<dbReference type="FunFam" id="3.10.20.590:FF:000001">
    <property type="entry name" value="Leucine--tRNA ligase"/>
    <property type="match status" value="1"/>
</dbReference>
<dbReference type="FunFam" id="3.40.50.620:FF:000056">
    <property type="entry name" value="Leucine--tRNA ligase"/>
    <property type="match status" value="1"/>
</dbReference>
<dbReference type="FunFam" id="3.40.50.620:FF:000077">
    <property type="entry name" value="Leucine--tRNA ligase"/>
    <property type="match status" value="1"/>
</dbReference>
<dbReference type="Gene3D" id="3.10.20.590">
    <property type="match status" value="1"/>
</dbReference>
<dbReference type="Gene3D" id="3.40.50.620">
    <property type="entry name" value="HUPs"/>
    <property type="match status" value="2"/>
</dbReference>
<dbReference type="Gene3D" id="1.10.730.10">
    <property type="entry name" value="Isoleucyl-tRNA Synthetase, Domain 1"/>
    <property type="match status" value="1"/>
</dbReference>
<dbReference type="HAMAP" id="MF_00049_B">
    <property type="entry name" value="Leu_tRNA_synth_B"/>
    <property type="match status" value="1"/>
</dbReference>
<dbReference type="InterPro" id="IPR001412">
    <property type="entry name" value="aa-tRNA-synth_I_CS"/>
</dbReference>
<dbReference type="InterPro" id="IPR002300">
    <property type="entry name" value="aa-tRNA-synth_Ia"/>
</dbReference>
<dbReference type="InterPro" id="IPR002302">
    <property type="entry name" value="Leu-tRNA-ligase"/>
</dbReference>
<dbReference type="InterPro" id="IPR025709">
    <property type="entry name" value="Leu_tRNA-synth_edit"/>
</dbReference>
<dbReference type="InterPro" id="IPR013155">
    <property type="entry name" value="M/V/L/I-tRNA-synth_anticd-bd"/>
</dbReference>
<dbReference type="InterPro" id="IPR015413">
    <property type="entry name" value="Methionyl/Leucyl_tRNA_Synth"/>
</dbReference>
<dbReference type="InterPro" id="IPR014729">
    <property type="entry name" value="Rossmann-like_a/b/a_fold"/>
</dbReference>
<dbReference type="InterPro" id="IPR009080">
    <property type="entry name" value="tRNAsynth_Ia_anticodon-bd"/>
</dbReference>
<dbReference type="InterPro" id="IPR009008">
    <property type="entry name" value="Val/Leu/Ile-tRNA-synth_edit"/>
</dbReference>
<dbReference type="NCBIfam" id="TIGR00396">
    <property type="entry name" value="leuS_bact"/>
    <property type="match status" value="1"/>
</dbReference>
<dbReference type="PANTHER" id="PTHR43740:SF2">
    <property type="entry name" value="LEUCINE--TRNA LIGASE, MITOCHONDRIAL"/>
    <property type="match status" value="1"/>
</dbReference>
<dbReference type="PANTHER" id="PTHR43740">
    <property type="entry name" value="LEUCYL-TRNA SYNTHETASE"/>
    <property type="match status" value="1"/>
</dbReference>
<dbReference type="Pfam" id="PF08264">
    <property type="entry name" value="Anticodon_1"/>
    <property type="match status" value="1"/>
</dbReference>
<dbReference type="Pfam" id="PF00133">
    <property type="entry name" value="tRNA-synt_1"/>
    <property type="match status" value="1"/>
</dbReference>
<dbReference type="Pfam" id="PF13603">
    <property type="entry name" value="tRNA-synt_1_2"/>
    <property type="match status" value="1"/>
</dbReference>
<dbReference type="Pfam" id="PF09334">
    <property type="entry name" value="tRNA-synt_1g"/>
    <property type="match status" value="1"/>
</dbReference>
<dbReference type="PRINTS" id="PR00985">
    <property type="entry name" value="TRNASYNTHLEU"/>
</dbReference>
<dbReference type="SUPFAM" id="SSF47323">
    <property type="entry name" value="Anticodon-binding domain of a subclass of class I aminoacyl-tRNA synthetases"/>
    <property type="match status" value="1"/>
</dbReference>
<dbReference type="SUPFAM" id="SSF52374">
    <property type="entry name" value="Nucleotidylyl transferase"/>
    <property type="match status" value="1"/>
</dbReference>
<dbReference type="SUPFAM" id="SSF50677">
    <property type="entry name" value="ValRS/IleRS/LeuRS editing domain"/>
    <property type="match status" value="1"/>
</dbReference>
<dbReference type="PROSITE" id="PS00178">
    <property type="entry name" value="AA_TRNA_LIGASE_I"/>
    <property type="match status" value="1"/>
</dbReference>
<reference key="1">
    <citation type="journal article" date="2005" name="J. Bacteriol.">
        <title>Whole-genome sequencing of Staphylococcus haemolyticus uncovers the extreme plasticity of its genome and the evolution of human-colonizing staphylococcal species.</title>
        <authorList>
            <person name="Takeuchi F."/>
            <person name="Watanabe S."/>
            <person name="Baba T."/>
            <person name="Yuzawa H."/>
            <person name="Ito T."/>
            <person name="Morimoto Y."/>
            <person name="Kuroda M."/>
            <person name="Cui L."/>
            <person name="Takahashi M."/>
            <person name="Ankai A."/>
            <person name="Baba S."/>
            <person name="Fukui S."/>
            <person name="Lee J.C."/>
            <person name="Hiramatsu K."/>
        </authorList>
    </citation>
    <scope>NUCLEOTIDE SEQUENCE [LARGE SCALE GENOMIC DNA]</scope>
    <source>
        <strain>JCSC1435</strain>
    </source>
</reference>
<sequence>MGYNHKEIEKKWQNYWADNKTFKTSDNLGQKKFYALDMFPYPSGAGLHVGHPEGYTATDIVSRYKRMQGYNVLHPMGWDAFGLPAEQYALDTGNDPREFTKQNIQTFKRQIQELGFSYDWDREVNTTDPEYYKWTQWIFIQLYNKGLAYVDEVAVNWCPALGTVLSNEEVVDGVSERGGHPVYRRPMKQWVLKITEYADRLLEDLDELDWPESIKDMQRNWIGRSEGARVSFEIENKDASIDVFTTRPDTIYGTTFLVLSPEHSLVNEITSEDKLEAVKKYQEDSSKKSDLERTDLAKDKSGVFTGAYAINPLTGKKLPIWIADYVLSSYGTGAVMAVPAHDERDYEFASKFNLPINEVIAGGDIQKEAYTGVGEHINSGELNGLDNETAISKAIELLVAKGAGEKKVNYKLRDWLFSRQRYWGEPIPVIHWEDGTMTTVPEEELPLLLPETDEIKPSGTGESPLANIDEFVNVIDEKTGMKGRRETNTMPQWAGSCWYYLRYIDPHNSNMLADPEKLKHWLPVDLYIGGVEHAVLHLLYARFWHKVLYDLGVVPTKEPFQKLFNQGMILGEGNEKMSKSKGNVVNPDDIVDSHGADTLRLYEMFMGPLDAAIAWSENGLDGSRRFLDRVWRLFINEDGSLSNKIVENNDNGLDKVYNQTVKKVTEDFNTLNFNTAISQLMVFINDCYKAETIYQPYAEGFVKMLAPIAPHIGEELWDRLGNEDTITYQPWPTYDESLLVDSEVEIVVQVNGKVRAKLNIPKDTSKDEMEALALKDENVKLSIEGKDIKKVIAVPQKLVNIVAK</sequence>
<keyword id="KW-0030">Aminoacyl-tRNA synthetase</keyword>
<keyword id="KW-0067">ATP-binding</keyword>
<keyword id="KW-0963">Cytoplasm</keyword>
<keyword id="KW-0436">Ligase</keyword>
<keyword id="KW-0547">Nucleotide-binding</keyword>
<keyword id="KW-0648">Protein biosynthesis</keyword>
<name>SYL_STAHJ</name>
<evidence type="ECO:0000255" key="1">
    <source>
        <dbReference type="HAMAP-Rule" id="MF_00049"/>
    </source>
</evidence>
<comment type="catalytic activity">
    <reaction evidence="1">
        <text>tRNA(Leu) + L-leucine + ATP = L-leucyl-tRNA(Leu) + AMP + diphosphate</text>
        <dbReference type="Rhea" id="RHEA:11688"/>
        <dbReference type="Rhea" id="RHEA-COMP:9613"/>
        <dbReference type="Rhea" id="RHEA-COMP:9622"/>
        <dbReference type="ChEBI" id="CHEBI:30616"/>
        <dbReference type="ChEBI" id="CHEBI:33019"/>
        <dbReference type="ChEBI" id="CHEBI:57427"/>
        <dbReference type="ChEBI" id="CHEBI:78442"/>
        <dbReference type="ChEBI" id="CHEBI:78494"/>
        <dbReference type="ChEBI" id="CHEBI:456215"/>
        <dbReference type="EC" id="6.1.1.4"/>
    </reaction>
</comment>
<comment type="subcellular location">
    <subcellularLocation>
        <location evidence="1">Cytoplasm</location>
    </subcellularLocation>
</comment>
<comment type="similarity">
    <text evidence="1">Belongs to the class-I aminoacyl-tRNA synthetase family.</text>
</comment>